<proteinExistence type="evidence at protein level"/>
<evidence type="ECO:0000255" key="1"/>
<evidence type="ECO:0000256" key="2">
    <source>
        <dbReference type="SAM" id="MobiDB-lite"/>
    </source>
</evidence>
<evidence type="ECO:0000269" key="3">
    <source>
    </source>
</evidence>
<evidence type="ECO:0000269" key="4">
    <source>
    </source>
</evidence>
<evidence type="ECO:0000269" key="5">
    <source>
    </source>
</evidence>
<evidence type="ECO:0000269" key="6">
    <source>
    </source>
</evidence>
<evidence type="ECO:0000269" key="7">
    <source>
    </source>
</evidence>
<evidence type="ECO:0000269" key="8">
    <source>
    </source>
</evidence>
<evidence type="ECO:0000269" key="9">
    <source>
    </source>
</evidence>
<evidence type="ECO:0000303" key="10">
    <source>
    </source>
</evidence>
<evidence type="ECO:0000305" key="11"/>
<evidence type="ECO:0000305" key="12">
    <source>
    </source>
</evidence>
<evidence type="ECO:0000305" key="13">
    <source>
    </source>
</evidence>
<evidence type="ECO:0007829" key="14">
    <source>
        <dbReference type="PDB" id="6GS9"/>
    </source>
</evidence>
<feature type="signal peptide" evidence="1">
    <location>
        <begin position="1"/>
        <end position="22"/>
    </location>
</feature>
<feature type="propeptide" id="PRO_0000450291" evidence="12">
    <location>
        <begin position="23"/>
        <end position="49"/>
    </location>
</feature>
<feature type="peptide" id="PRO_0000043722" description="Aurein-2.5" evidence="3">
    <location>
        <begin position="50"/>
        <end position="65"/>
    </location>
</feature>
<feature type="propeptide" id="PRO_0000450292" evidence="12">
    <location>
        <begin position="69"/>
        <end position="72"/>
    </location>
</feature>
<feature type="region of interest" description="Disordered" evidence="2">
    <location>
        <begin position="27"/>
        <end position="47"/>
    </location>
</feature>
<feature type="compositionally biased region" description="Basic and acidic residues" evidence="2">
    <location>
        <begin position="38"/>
        <end position="47"/>
    </location>
</feature>
<feature type="modified residue" description="Leucine amide" evidence="3">
    <location>
        <position position="65"/>
    </location>
</feature>
<feature type="helix" evidence="14">
    <location>
        <begin position="54"/>
        <end position="61"/>
    </location>
</feature>
<organism>
    <name type="scientific">Ranoidea aurea</name>
    <name type="common">Green and golden bell frog</name>
    <name type="synonym">Litoria aurea</name>
    <dbReference type="NCBI Taxonomy" id="8371"/>
    <lineage>
        <taxon>Eukaryota</taxon>
        <taxon>Metazoa</taxon>
        <taxon>Chordata</taxon>
        <taxon>Craniata</taxon>
        <taxon>Vertebrata</taxon>
        <taxon>Euteleostomi</taxon>
        <taxon>Amphibia</taxon>
        <taxon>Batrachia</taxon>
        <taxon>Anura</taxon>
        <taxon>Neobatrachia</taxon>
        <taxon>Hyloidea</taxon>
        <taxon>Hylidae</taxon>
        <taxon>Pelodryadinae</taxon>
        <taxon>Ranoidea</taxon>
    </lineage>
</organism>
<reference key="1">
    <citation type="journal article" date="2005" name="Regul. Pept.">
        <title>The structural organization of aurein precursor cDNAs from the skin secretion of the Australian green and golden bell frog, Litoria aurea.</title>
        <authorList>
            <person name="Chen T."/>
            <person name="Xue Y."/>
            <person name="Zhou M."/>
            <person name="Shaw C."/>
        </authorList>
    </citation>
    <scope>NUCLEOTIDE SEQUENCE [MRNA]</scope>
    <scope>MASS SPECTROMETRY</scope>
    <scope>SUBCELLULAR LOCATION</scope>
    <source>
        <tissue>Skin</tissue>
    </source>
</reference>
<reference key="2">
    <citation type="journal article" date="2000" name="Eur. J. Biochem.">
        <title>The antibiotic and anticancer active aurein peptides from the australian bell frogs Litoria aurea and Litoria raniformis the solution structure of aurein 1.2.</title>
        <authorList>
            <person name="Rozek T."/>
            <person name="Wegener K.L."/>
            <person name="Bowie J.H."/>
            <person name="Olver I.N."/>
            <person name="Carver J.A."/>
            <person name="Wallace J.C."/>
            <person name="Tyler M.J."/>
        </authorList>
    </citation>
    <scope>PROTEIN SEQUENCE OF 50-65</scope>
    <scope>AMIDATION AT LEU-65</scope>
    <scope>FUNCTION</scope>
    <scope>SUBCELLULAR LOCATION</scope>
    <source>
        <tissue>Skin secretion</tissue>
    </source>
</reference>
<reference key="3">
    <citation type="journal article" date="2009" name="Colloids Surf. B Biointerfaces">
        <title>A study on the interactions of Aurein 2.5 with bacterial membranes.</title>
        <authorList>
            <person name="Dennison S.R."/>
            <person name="Morton L.H."/>
            <person name="Shorrocks A.J."/>
            <person name="Harris F."/>
            <person name="Phoenix D.A."/>
        </authorList>
    </citation>
    <scope>FUNCTION</scope>
    <scope>SYNTHESIS OF 50-65</scope>
</reference>
<reference key="4">
    <citation type="journal article" date="2012" name="Protein Pept. Lett.">
        <title>Effect of amidation on the antimicrobial peptide aurein 2.5 from Australian southern bell frogs.</title>
        <authorList>
            <person name="Dennison S.R."/>
            <person name="Morton L.H."/>
            <person name="Phoenix D.A."/>
        </authorList>
    </citation>
    <scope>PTM</scope>
</reference>
<reference key="5">
    <citation type="journal article" date="2013" name="FEMS Microbiol. Lett.">
        <title>Antimicrobial activity of aurein 2.5 against yeasts.</title>
        <authorList>
            <person name="Dennison S.R."/>
            <person name="Harris F."/>
            <person name="Morton L.H."/>
            <person name="Phoenix D.A."/>
        </authorList>
    </citation>
    <scope>FUNCTION</scope>
    <scope>SYNTHESIS OF 50-65</scope>
</reference>
<reference key="6">
    <citation type="journal article" date="2014" name="Eur. Biophys. J.">
        <title>The interaction of aurein 2.5 with fungal membranes.</title>
        <authorList>
            <person name="Dennison S.R."/>
            <person name="Morton L.H."/>
            <person name="Harris F."/>
            <person name="Phoenix D.A."/>
        </authorList>
    </citation>
    <scope>FUNCTION</scope>
</reference>
<reference key="7">
    <citation type="journal article" date="2019" name="Sci. Rep.">
        <title>Temporin L and aurein 2.5 have identical conformations but subtly distinct membrane and antibacterial activities.</title>
        <authorList>
            <person name="Manzo G."/>
            <person name="Ferguson P.M."/>
            <person name="Hind C.K."/>
            <person name="Clifford M."/>
            <person name="Gustilo V.B."/>
            <person name="Ali H."/>
            <person name="Bansal S.S."/>
            <person name="Bui T.T."/>
            <person name="Drake A.F."/>
            <person name="Atkinson R.A."/>
            <person name="Sutton J.M."/>
            <person name="Lorenz C.D."/>
            <person name="Phoenix D.A."/>
            <person name="Mason A.J."/>
        </authorList>
    </citation>
    <scope>STRUCTURE BY NMR IN SDS MICELLES</scope>
    <scope>3D-STRUCTURE MODELING IN BACTERIAL MIMETIC MEMBRANES</scope>
    <scope>FUNCTION</scope>
</reference>
<dbReference type="EMBL" id="AJ850129">
    <property type="protein sequence ID" value="CAH61713.1"/>
    <property type="molecule type" value="mRNA"/>
</dbReference>
<dbReference type="PDB" id="6GS9">
    <property type="method" value="NMR"/>
    <property type="chains" value="A=50-65"/>
</dbReference>
<dbReference type="PDBsum" id="6GS9"/>
<dbReference type="SMR" id="P69019"/>
<dbReference type="GO" id="GO:0005576">
    <property type="term" value="C:extracellular region"/>
    <property type="evidence" value="ECO:0007669"/>
    <property type="project" value="UniProtKB-SubCell"/>
</dbReference>
<dbReference type="GO" id="GO:0016020">
    <property type="term" value="C:membrane"/>
    <property type="evidence" value="ECO:0007669"/>
    <property type="project" value="UniProtKB-KW"/>
</dbReference>
<dbReference type="GO" id="GO:0044218">
    <property type="term" value="C:other organism cell membrane"/>
    <property type="evidence" value="ECO:0007669"/>
    <property type="project" value="UniProtKB-KW"/>
</dbReference>
<dbReference type="GO" id="GO:0008289">
    <property type="term" value="F:lipid binding"/>
    <property type="evidence" value="ECO:0000269"/>
    <property type="project" value="DisProt"/>
</dbReference>
<dbReference type="GO" id="GO:0042742">
    <property type="term" value="P:defense response to bacterium"/>
    <property type="evidence" value="ECO:0007669"/>
    <property type="project" value="UniProtKB-KW"/>
</dbReference>
<dbReference type="GO" id="GO:0050832">
    <property type="term" value="P:defense response to fungus"/>
    <property type="evidence" value="ECO:0007669"/>
    <property type="project" value="UniProtKB-KW"/>
</dbReference>
<dbReference type="GO" id="GO:0031640">
    <property type="term" value="P:killing of cells of another organism"/>
    <property type="evidence" value="ECO:0007669"/>
    <property type="project" value="UniProtKB-KW"/>
</dbReference>
<dbReference type="InterPro" id="IPR004275">
    <property type="entry name" value="Frog_antimicrobial_propeptide"/>
</dbReference>
<dbReference type="InterPro" id="IPR016322">
    <property type="entry name" value="FSAP"/>
</dbReference>
<dbReference type="Pfam" id="PF03032">
    <property type="entry name" value="FSAP_sig_propep"/>
    <property type="match status" value="1"/>
</dbReference>
<dbReference type="PIRSF" id="PIRSF001822">
    <property type="entry name" value="Dermaseptin_precursor"/>
    <property type="match status" value="1"/>
</dbReference>
<accession>P69019</accession>
<accession>P82392</accession>
<accession>Q5K0E4</accession>
<sequence>MAFLKKSLFLVLFLGLVSLSICEKEKRQNEEDEDENEAANHEEGSEEKRGLFDIVKKVVGAFGSLGKRNDLE</sequence>
<comment type="function">
    <text evidence="3 5 7 8 9">Amphipathic alpha-helical antimicrobial peptide with moderate to potent activity against Gram-positive bacteria, Gram-negative bacteria and fungi (PubMed:10951191, PubMed:19056250, PubMed:23841919, PubMed:24728560, PubMed:31358802). Also shows a weak activity against biofilm of both Gram-positive and Gram-negative bacteria (PubMed:19056250). Probably acts by disturbing membrane functions with its amphipathic structure (PubMed:10951191, PubMed:23841919). Kills fungi via membranolytic action (PubMed:24728560). Enhanced sterol levels in lipid composition membranes reduce interaction of this peptide with membranes, having a protective effect against the lytic ability of the peptide (PubMed:24728560). Shows anticancer activity (PubMed:10951191).</text>
</comment>
<comment type="subunit">
    <text evidence="13">May be monomeric or may oligomerize as homodimers or homotrimers in Gram-positive and Gram-negative bacteria mimetic membranes.</text>
</comment>
<comment type="subcellular location">
    <subcellularLocation>
        <location evidence="3 4">Secreted</location>
    </subcellularLocation>
    <subcellularLocation>
        <location evidence="9">Target cell membrane</location>
    </subcellularLocation>
    <text evidence="9">Contact and insertion into membrane begin at the N-terminus.</text>
</comment>
<comment type="tissue specificity">
    <text evidence="12">Expressed by the skin dorsal glands.</text>
</comment>
<comment type="PTM">
    <text evidence="6">C-terminal amidation enhances antibacterial activity. This increase may be due to stabilization of the alpha-helical structure at the membrane interface.</text>
</comment>
<comment type="mass spectrometry"/>
<comment type="miscellaneous">
    <text evidence="11">The primary structure of the mature peptide is identical to that of aurein-2.5 from Ranoidea raniformis (AC P69018).</text>
</comment>
<comment type="similarity">
    <text evidence="11">Belongs to the frog skin active peptide (FSAP) family. Aurein subfamily.</text>
</comment>
<comment type="online information" name="The antimicrobial peptide database">
    <link uri="https://wangapd3.com/database/query_output.php?ID=00018"/>
</comment>
<keyword id="KW-0002">3D-structure</keyword>
<keyword id="KW-0027">Amidation</keyword>
<keyword id="KW-0878">Amphibian defense peptide</keyword>
<keyword id="KW-0044">Antibiotic</keyword>
<keyword id="KW-0929">Antimicrobial</keyword>
<keyword id="KW-0165">Cleavage on pair of basic residues</keyword>
<keyword id="KW-0903">Direct protein sequencing</keyword>
<keyword id="KW-0295">Fungicide</keyword>
<keyword id="KW-0446">Lipid-binding</keyword>
<keyword id="KW-0472">Membrane</keyword>
<keyword id="KW-0964">Secreted</keyword>
<keyword id="KW-0732">Signal</keyword>
<keyword id="KW-1052">Target cell membrane</keyword>
<keyword id="KW-1053">Target membrane</keyword>
<protein>
    <recommendedName>
        <fullName evidence="10">Aurein-2.5</fullName>
    </recommendedName>
</protein>
<name>AUR25_RANAE</name>